<reference key="1">
    <citation type="journal article" date="2005" name="Science">
        <title>The genome of the basidiomycetous yeast and human pathogen Cryptococcus neoformans.</title>
        <authorList>
            <person name="Loftus B.J."/>
            <person name="Fung E."/>
            <person name="Roncaglia P."/>
            <person name="Rowley D."/>
            <person name="Amedeo P."/>
            <person name="Bruno D."/>
            <person name="Vamathevan J."/>
            <person name="Miranda M."/>
            <person name="Anderson I.J."/>
            <person name="Fraser J.A."/>
            <person name="Allen J.E."/>
            <person name="Bosdet I.E."/>
            <person name="Brent M.R."/>
            <person name="Chiu R."/>
            <person name="Doering T.L."/>
            <person name="Donlin M.J."/>
            <person name="D'Souza C.A."/>
            <person name="Fox D.S."/>
            <person name="Grinberg V."/>
            <person name="Fu J."/>
            <person name="Fukushima M."/>
            <person name="Haas B.J."/>
            <person name="Huang J.C."/>
            <person name="Janbon G."/>
            <person name="Jones S.J.M."/>
            <person name="Koo H.L."/>
            <person name="Krzywinski M.I."/>
            <person name="Kwon-Chung K.J."/>
            <person name="Lengeler K.B."/>
            <person name="Maiti R."/>
            <person name="Marra M.A."/>
            <person name="Marra R.E."/>
            <person name="Mathewson C.A."/>
            <person name="Mitchell T.G."/>
            <person name="Pertea M."/>
            <person name="Riggs F.R."/>
            <person name="Salzberg S.L."/>
            <person name="Schein J.E."/>
            <person name="Shvartsbeyn A."/>
            <person name="Shin H."/>
            <person name="Shumway M."/>
            <person name="Specht C.A."/>
            <person name="Suh B.B."/>
            <person name="Tenney A."/>
            <person name="Utterback T.R."/>
            <person name="Wickes B.L."/>
            <person name="Wortman J.R."/>
            <person name="Wye N.H."/>
            <person name="Kronstad J.W."/>
            <person name="Lodge J.K."/>
            <person name="Heitman J."/>
            <person name="Davis R.W."/>
            <person name="Fraser C.M."/>
            <person name="Hyman R.W."/>
        </authorList>
    </citation>
    <scope>NUCLEOTIDE SEQUENCE [LARGE SCALE GENOMIC DNA]</scope>
    <source>
        <strain>B-3501A</strain>
    </source>
</reference>
<sequence>MAPQPLKVGTSKLSKMVKSAPKTAGKSKKRAVEQVSEESDEEFGDQGSGIDMSDDEEEVDGDDEEDEDEAFPEFDSELEDNDQEEASDEEQDEQDTSDESEIVEEDSDSESGYNTSDIERMYASDDDLSSEENKDLPVDEKLSRLIAKNTVKPDDSIGTDDKISRAKEGVGRLVPSKHVKGSFVREYDEYEAGYGSESSTEDNPNTVGNIPMEWYDDLPHIGYDVNGRKIFRPLQGDELDKFLANVEDPSAWTSAEDKLLQQNVQLSDKELDIIRRLERAENPDADFDPYQPTIEWFTGEGKERVMPLSAAPEPKRRFVPSKWEHKKIMKIVKAIREGRIIPNKPSAEKPRFYPIWSDADQHNPHVMYMPAPQLPPPKTAESYNPPEEYLPTEEEKAEWEAMDKEDRKTDFLPEKYDALRKVPGYKNLVQEKFERCLDLYLAPRTRRVKLNIDPDSLIPKLPAPKELKPFPIASTVQYRHPGDTRVRSVSTSPDGQWIASGSEDGVVRVWDLGNGREVWRWDLHAGPIQYVEWSPSREESLLVALVAGKIAVLSPLALVAPHIAAQTLTHSNTAFATSSATTKQGAGNEVKGIESVKWTRPSERERERGVLVYVEVPGTPKQVTWHRKGDYFATVASDAANKSVLIHQLSRHGSQSPFRKTPGTIQRVAFHPSKPHFFAATQRYIRLYDLAAQKLIRTLQSGVKWISSMDVHSGGDNLIIGSYDKKLAWFDMDLSAKPYKTLRYHNRALRSVAYHPTLPLFASASDDGTVHIFHCTVYTDLMQNPLIVPLKILRGHKVIDGIGVLDLRWVPGKPWLVSSGADGEVRLWCS</sequence>
<comment type="function">
    <text evidence="1">Component of the NOP7 complex, which is required for maturation of the 25S and 5.8S ribosomal RNAs and formation of the 60S ribosome.</text>
</comment>
<comment type="subunit">
    <text evidence="1">Component of the NOP7 complex, composed of ERB1, NOP7 and YTM1. The complex is held together by ERB1, which interacts with NOP7 via its N-terminal domain and with YTM1 via a high-affinity interaction between the seven-bladed beta-propeller domains of the 2 proteins. The NOP7 complex associates with the 66S pre-ribosome.</text>
</comment>
<comment type="subcellular location">
    <subcellularLocation>
        <location evidence="1">Nucleus</location>
        <location evidence="1">Nucleolus</location>
    </subcellularLocation>
    <subcellularLocation>
        <location evidence="1">Nucleus</location>
        <location evidence="1">Nucleoplasm</location>
    </subcellularLocation>
</comment>
<comment type="similarity">
    <text evidence="1">Belongs to the WD repeat BOP1/ERB1 family.</text>
</comment>
<keyword id="KW-0539">Nucleus</keyword>
<keyword id="KW-0677">Repeat</keyword>
<keyword id="KW-0690">Ribosome biogenesis</keyword>
<keyword id="KW-0698">rRNA processing</keyword>
<keyword id="KW-0853">WD repeat</keyword>
<feature type="chain" id="PRO_0000410330" description="Ribosome biogenesis protein ERB1">
    <location>
        <begin position="1"/>
        <end position="830"/>
    </location>
</feature>
<feature type="repeat" description="WD 1">
    <location>
        <begin position="481"/>
        <end position="520"/>
    </location>
</feature>
<feature type="repeat" description="WD 2">
    <location>
        <begin position="523"/>
        <end position="563"/>
    </location>
</feature>
<feature type="repeat" description="WD 3">
    <location>
        <begin position="660"/>
        <end position="698"/>
    </location>
</feature>
<feature type="repeat" description="WD 4">
    <location>
        <begin position="701"/>
        <end position="740"/>
    </location>
</feature>
<feature type="repeat" description="WD 5">
    <location>
        <begin position="744"/>
        <end position="783"/>
    </location>
</feature>
<feature type="repeat" description="WD 6">
    <location>
        <begin position="799"/>
        <end position="830"/>
    </location>
</feature>
<feature type="region of interest" description="Disordered" evidence="2">
    <location>
        <begin position="1"/>
        <end position="141"/>
    </location>
</feature>
<feature type="compositionally biased region" description="Acidic residues" evidence="2">
    <location>
        <begin position="35"/>
        <end position="44"/>
    </location>
</feature>
<feature type="compositionally biased region" description="Acidic residues" evidence="2">
    <location>
        <begin position="52"/>
        <end position="109"/>
    </location>
</feature>
<feature type="compositionally biased region" description="Basic and acidic residues" evidence="2">
    <location>
        <begin position="131"/>
        <end position="141"/>
    </location>
</feature>
<proteinExistence type="inferred from homology"/>
<name>ERB1_CRYNB</name>
<organism>
    <name type="scientific">Cryptococcus neoformans var. neoformans serotype D (strain B-3501A)</name>
    <name type="common">Filobasidiella neoformans</name>
    <dbReference type="NCBI Taxonomy" id="283643"/>
    <lineage>
        <taxon>Eukaryota</taxon>
        <taxon>Fungi</taxon>
        <taxon>Dikarya</taxon>
        <taxon>Basidiomycota</taxon>
        <taxon>Agaricomycotina</taxon>
        <taxon>Tremellomycetes</taxon>
        <taxon>Tremellales</taxon>
        <taxon>Cryptococcaceae</taxon>
        <taxon>Cryptococcus</taxon>
        <taxon>Cryptococcus neoformans species complex</taxon>
    </lineage>
</organism>
<protein>
    <recommendedName>
        <fullName evidence="1">Ribosome biogenesis protein ERB1</fullName>
    </recommendedName>
    <alternativeName>
        <fullName evidence="1">Eukaryotic ribosome biogenesis protein 1</fullName>
    </alternativeName>
</protein>
<accession>P0CS35</accession>
<accession>Q55YA2</accession>
<accession>Q5KLN6</accession>
<gene>
    <name evidence="1" type="primary">ERB1</name>
    <name type="ordered locus">CNBB1130</name>
</gene>
<dbReference type="EMBL" id="AAEY01000007">
    <property type="protein sequence ID" value="EAL22664.1"/>
    <property type="molecule type" value="Genomic_DNA"/>
</dbReference>
<dbReference type="RefSeq" id="XP_777311.1">
    <property type="nucleotide sequence ID" value="XM_772218.1"/>
</dbReference>
<dbReference type="SMR" id="P0CS35"/>
<dbReference type="GeneID" id="4934203"/>
<dbReference type="KEGG" id="cnb:CNBB1130"/>
<dbReference type="VEuPathDB" id="FungiDB:CNBB1130"/>
<dbReference type="HOGENOM" id="CLU_011390_0_1_1"/>
<dbReference type="OrthoDB" id="3224at5206"/>
<dbReference type="GO" id="GO:0005654">
    <property type="term" value="C:nucleoplasm"/>
    <property type="evidence" value="ECO:0007669"/>
    <property type="project" value="UniProtKB-SubCell"/>
</dbReference>
<dbReference type="GO" id="GO:0070545">
    <property type="term" value="C:PeBoW complex"/>
    <property type="evidence" value="ECO:0007669"/>
    <property type="project" value="EnsemblFungi"/>
</dbReference>
<dbReference type="GO" id="GO:0030687">
    <property type="term" value="C:preribosome, large subunit precursor"/>
    <property type="evidence" value="ECO:0007669"/>
    <property type="project" value="UniProtKB-UniRule"/>
</dbReference>
<dbReference type="GO" id="GO:0070180">
    <property type="term" value="F:large ribosomal subunit rRNA binding"/>
    <property type="evidence" value="ECO:0007669"/>
    <property type="project" value="EnsemblFungi"/>
</dbReference>
<dbReference type="GO" id="GO:0043021">
    <property type="term" value="F:ribonucleoprotein complex binding"/>
    <property type="evidence" value="ECO:0007669"/>
    <property type="project" value="UniProtKB-UniRule"/>
</dbReference>
<dbReference type="GO" id="GO:0000466">
    <property type="term" value="P:maturation of 5.8S rRNA from tricistronic rRNA transcript (SSU-rRNA, 5.8S rRNA, LSU-rRNA)"/>
    <property type="evidence" value="ECO:0007669"/>
    <property type="project" value="UniProtKB-UniRule"/>
</dbReference>
<dbReference type="GO" id="GO:0000463">
    <property type="term" value="P:maturation of LSU-rRNA from tricistronic rRNA transcript (SSU-rRNA, 5.8S rRNA, LSU-rRNA)"/>
    <property type="evidence" value="ECO:0007669"/>
    <property type="project" value="UniProtKB-UniRule"/>
</dbReference>
<dbReference type="FunFam" id="2.130.10.10:FF:000576">
    <property type="entry name" value="Ribosome biogenesis protein ERB1"/>
    <property type="match status" value="1"/>
</dbReference>
<dbReference type="Gene3D" id="2.130.10.10">
    <property type="entry name" value="YVTN repeat-like/Quinoprotein amine dehydrogenase"/>
    <property type="match status" value="1"/>
</dbReference>
<dbReference type="HAMAP" id="MF_03027">
    <property type="entry name" value="BOP1"/>
    <property type="match status" value="1"/>
</dbReference>
<dbReference type="InterPro" id="IPR028598">
    <property type="entry name" value="BOP1/Erb1"/>
</dbReference>
<dbReference type="InterPro" id="IPR012953">
    <property type="entry name" value="BOP1_N_dom"/>
</dbReference>
<dbReference type="InterPro" id="IPR015943">
    <property type="entry name" value="WD40/YVTN_repeat-like_dom_sf"/>
</dbReference>
<dbReference type="InterPro" id="IPR019775">
    <property type="entry name" value="WD40_repeat_CS"/>
</dbReference>
<dbReference type="InterPro" id="IPR036322">
    <property type="entry name" value="WD40_repeat_dom_sf"/>
</dbReference>
<dbReference type="InterPro" id="IPR001680">
    <property type="entry name" value="WD40_rpt"/>
</dbReference>
<dbReference type="PANTHER" id="PTHR17605:SF0">
    <property type="entry name" value="RIBOSOME BIOGENESIS PROTEIN BOP1"/>
    <property type="match status" value="1"/>
</dbReference>
<dbReference type="PANTHER" id="PTHR17605">
    <property type="entry name" value="RIBOSOME BIOGENESIS PROTEIN BOP1 BLOCK OF PROLIFERATION 1 PROTEIN"/>
    <property type="match status" value="1"/>
</dbReference>
<dbReference type="Pfam" id="PF08145">
    <property type="entry name" value="BOP1NT"/>
    <property type="match status" value="1"/>
</dbReference>
<dbReference type="Pfam" id="PF00400">
    <property type="entry name" value="WD40"/>
    <property type="match status" value="3"/>
</dbReference>
<dbReference type="SMART" id="SM01035">
    <property type="entry name" value="BOP1NT"/>
    <property type="match status" value="1"/>
</dbReference>
<dbReference type="SMART" id="SM00320">
    <property type="entry name" value="WD40"/>
    <property type="match status" value="6"/>
</dbReference>
<dbReference type="SUPFAM" id="SSF50978">
    <property type="entry name" value="WD40 repeat-like"/>
    <property type="match status" value="1"/>
</dbReference>
<dbReference type="PROSITE" id="PS00678">
    <property type="entry name" value="WD_REPEATS_1"/>
    <property type="match status" value="1"/>
</dbReference>
<dbReference type="PROSITE" id="PS50082">
    <property type="entry name" value="WD_REPEATS_2"/>
    <property type="match status" value="3"/>
</dbReference>
<dbReference type="PROSITE" id="PS50294">
    <property type="entry name" value="WD_REPEATS_REGION"/>
    <property type="match status" value="2"/>
</dbReference>
<evidence type="ECO:0000255" key="1">
    <source>
        <dbReference type="HAMAP-Rule" id="MF_03027"/>
    </source>
</evidence>
<evidence type="ECO:0000256" key="2">
    <source>
        <dbReference type="SAM" id="MobiDB-lite"/>
    </source>
</evidence>